<gene>
    <name evidence="1" type="primary">rplM</name>
    <name type="ordered locus">BAPKO_0348</name>
    <name type="ordered locus">BafPKo_0339</name>
</gene>
<accession>Q0SNH3</accession>
<accession>G0IRQ5</accession>
<reference key="1">
    <citation type="journal article" date="2006" name="BMC Genomics">
        <title>Comparative genome analysis: selection pressure on the Borrelia vls cassettes is essential for infectivity.</title>
        <authorList>
            <person name="Gloeckner G."/>
            <person name="Schulte-Spechtel U."/>
            <person name="Schilhabel M."/>
            <person name="Felder M."/>
            <person name="Suehnel J."/>
            <person name="Wilske B."/>
            <person name="Platzer M."/>
        </authorList>
    </citation>
    <scope>NUCLEOTIDE SEQUENCE [LARGE SCALE GENOMIC DNA]</scope>
    <source>
        <strain>PKo</strain>
    </source>
</reference>
<reference key="2">
    <citation type="journal article" date="2011" name="J. Bacteriol.">
        <title>Whole-genome sequences of two Borrelia afzelii and two Borrelia garinii Lyme disease agent isolates.</title>
        <authorList>
            <person name="Casjens S.R."/>
            <person name="Mongodin E.F."/>
            <person name="Qiu W.G."/>
            <person name="Dunn J.J."/>
            <person name="Luft B.J."/>
            <person name="Fraser-Liggett C.M."/>
            <person name="Schutzer S.E."/>
        </authorList>
    </citation>
    <scope>NUCLEOTIDE SEQUENCE [LARGE SCALE GENOMIC DNA]</scope>
    <source>
        <strain>PKo</strain>
    </source>
</reference>
<feature type="chain" id="PRO_1000055348" description="Large ribosomal subunit protein uL13">
    <location>
        <begin position="1"/>
        <end position="152"/>
    </location>
</feature>
<dbReference type="EMBL" id="CP000395">
    <property type="protein sequence ID" value="ABH01605.1"/>
    <property type="molecule type" value="Genomic_DNA"/>
</dbReference>
<dbReference type="EMBL" id="CP002933">
    <property type="protein sequence ID" value="AEL69565.1"/>
    <property type="molecule type" value="Genomic_DNA"/>
</dbReference>
<dbReference type="RefSeq" id="WP_004790698.1">
    <property type="nucleotide sequence ID" value="NZ_CP160066.1"/>
</dbReference>
<dbReference type="SMR" id="Q0SNH3"/>
<dbReference type="STRING" id="29518.BLA32_02615"/>
<dbReference type="GeneID" id="77265176"/>
<dbReference type="KEGG" id="baf:BAPKO_0348"/>
<dbReference type="KEGG" id="bafz:BafPKo_0339"/>
<dbReference type="PATRIC" id="fig|390236.22.peg.332"/>
<dbReference type="eggNOG" id="COG0102">
    <property type="taxonomic scope" value="Bacteria"/>
</dbReference>
<dbReference type="HOGENOM" id="CLU_082184_2_2_12"/>
<dbReference type="OrthoDB" id="9801330at2"/>
<dbReference type="Proteomes" id="UP000005216">
    <property type="component" value="Chromosome"/>
</dbReference>
<dbReference type="GO" id="GO:0022625">
    <property type="term" value="C:cytosolic large ribosomal subunit"/>
    <property type="evidence" value="ECO:0007669"/>
    <property type="project" value="TreeGrafter"/>
</dbReference>
<dbReference type="GO" id="GO:0003729">
    <property type="term" value="F:mRNA binding"/>
    <property type="evidence" value="ECO:0007669"/>
    <property type="project" value="TreeGrafter"/>
</dbReference>
<dbReference type="GO" id="GO:0003735">
    <property type="term" value="F:structural constituent of ribosome"/>
    <property type="evidence" value="ECO:0007669"/>
    <property type="project" value="InterPro"/>
</dbReference>
<dbReference type="GO" id="GO:0017148">
    <property type="term" value="P:negative regulation of translation"/>
    <property type="evidence" value="ECO:0007669"/>
    <property type="project" value="TreeGrafter"/>
</dbReference>
<dbReference type="GO" id="GO:0006412">
    <property type="term" value="P:translation"/>
    <property type="evidence" value="ECO:0007669"/>
    <property type="project" value="UniProtKB-UniRule"/>
</dbReference>
<dbReference type="CDD" id="cd00392">
    <property type="entry name" value="Ribosomal_L13"/>
    <property type="match status" value="1"/>
</dbReference>
<dbReference type="Gene3D" id="3.90.1180.10">
    <property type="entry name" value="Ribosomal protein L13"/>
    <property type="match status" value="1"/>
</dbReference>
<dbReference type="HAMAP" id="MF_01366">
    <property type="entry name" value="Ribosomal_uL13"/>
    <property type="match status" value="1"/>
</dbReference>
<dbReference type="InterPro" id="IPR005822">
    <property type="entry name" value="Ribosomal_uL13"/>
</dbReference>
<dbReference type="InterPro" id="IPR005823">
    <property type="entry name" value="Ribosomal_uL13_bac-type"/>
</dbReference>
<dbReference type="InterPro" id="IPR023563">
    <property type="entry name" value="Ribosomal_uL13_CS"/>
</dbReference>
<dbReference type="InterPro" id="IPR036899">
    <property type="entry name" value="Ribosomal_uL13_sf"/>
</dbReference>
<dbReference type="NCBIfam" id="TIGR01066">
    <property type="entry name" value="rplM_bact"/>
    <property type="match status" value="1"/>
</dbReference>
<dbReference type="PANTHER" id="PTHR11545:SF2">
    <property type="entry name" value="LARGE RIBOSOMAL SUBUNIT PROTEIN UL13M"/>
    <property type="match status" value="1"/>
</dbReference>
<dbReference type="PANTHER" id="PTHR11545">
    <property type="entry name" value="RIBOSOMAL PROTEIN L13"/>
    <property type="match status" value="1"/>
</dbReference>
<dbReference type="Pfam" id="PF00572">
    <property type="entry name" value="Ribosomal_L13"/>
    <property type="match status" value="1"/>
</dbReference>
<dbReference type="PIRSF" id="PIRSF002181">
    <property type="entry name" value="Ribosomal_L13"/>
    <property type="match status" value="1"/>
</dbReference>
<dbReference type="SUPFAM" id="SSF52161">
    <property type="entry name" value="Ribosomal protein L13"/>
    <property type="match status" value="1"/>
</dbReference>
<dbReference type="PROSITE" id="PS00783">
    <property type="entry name" value="RIBOSOMAL_L13"/>
    <property type="match status" value="1"/>
</dbReference>
<keyword id="KW-0687">Ribonucleoprotein</keyword>
<keyword id="KW-0689">Ribosomal protein</keyword>
<protein>
    <recommendedName>
        <fullName evidence="1">Large ribosomal subunit protein uL13</fullName>
    </recommendedName>
    <alternativeName>
        <fullName evidence="2">50S ribosomal protein L13</fullName>
    </alternativeName>
</protein>
<comment type="function">
    <text evidence="1">This protein is one of the early assembly proteins of the 50S ribosomal subunit, although it is not seen to bind rRNA by itself. It is important during the early stages of 50S assembly.</text>
</comment>
<comment type="subunit">
    <text evidence="1">Part of the 50S ribosomal subunit.</text>
</comment>
<comment type="similarity">
    <text evidence="1">Belongs to the universal ribosomal protein uL13 family.</text>
</comment>
<proteinExistence type="inferred from homology"/>
<evidence type="ECO:0000255" key="1">
    <source>
        <dbReference type="HAMAP-Rule" id="MF_01366"/>
    </source>
</evidence>
<evidence type="ECO:0000305" key="2"/>
<sequence length="152" mass="17347">MNKITNNVTIWIKPKTVEKKWYVIDAADRVLGKVAVDVVRILRGKHKAYYTPHQDLGDNVIVINASKVRLTGKKYQQKLYYRHSRYPGGLYSDTFRTLSERKPCAPLEIAIKGMLPKGPLGRGLFRNLKVFSGSEHTLKAQNPVKLEANLER</sequence>
<organism>
    <name type="scientific">Borreliella afzelii (strain PKo)</name>
    <name type="common">Borrelia afzelii</name>
    <dbReference type="NCBI Taxonomy" id="390236"/>
    <lineage>
        <taxon>Bacteria</taxon>
        <taxon>Pseudomonadati</taxon>
        <taxon>Spirochaetota</taxon>
        <taxon>Spirochaetia</taxon>
        <taxon>Spirochaetales</taxon>
        <taxon>Borreliaceae</taxon>
        <taxon>Borreliella</taxon>
    </lineage>
</organism>
<name>RL13_BORAP</name>